<gene>
    <name type="primary">HOXD13</name>
    <name type="synonym">CHOX-4.8</name>
</gene>
<keyword id="KW-0217">Developmental protein</keyword>
<keyword id="KW-0238">DNA-binding</keyword>
<keyword id="KW-0371">Homeobox</keyword>
<keyword id="KW-0539">Nucleus</keyword>
<keyword id="KW-1185">Reference proteome</keyword>
<keyword id="KW-0804">Transcription</keyword>
<keyword id="KW-0805">Transcription regulation</keyword>
<accession>P24344</accession>
<accession>Q90781</accession>
<protein>
    <recommendedName>
        <fullName>Homeobox protein Hox-D13</fullName>
    </recommendedName>
    <alternativeName>
        <fullName>Homeobox protein Hox-4.8</fullName>
        <shortName>Chox-4.8</shortName>
    </alternativeName>
    <alternativeName>
        <fullName>Homeobox protein Hox-4G</fullName>
        <shortName>Chox-4G</shortName>
    </alternativeName>
</protein>
<organism>
    <name type="scientific">Gallus gallus</name>
    <name type="common">Chicken</name>
    <dbReference type="NCBI Taxonomy" id="9031"/>
    <lineage>
        <taxon>Eukaryota</taxon>
        <taxon>Metazoa</taxon>
        <taxon>Chordata</taxon>
        <taxon>Craniata</taxon>
        <taxon>Vertebrata</taxon>
        <taxon>Euteleostomi</taxon>
        <taxon>Archelosauria</taxon>
        <taxon>Archosauria</taxon>
        <taxon>Dinosauria</taxon>
        <taxon>Saurischia</taxon>
        <taxon>Theropoda</taxon>
        <taxon>Coelurosauria</taxon>
        <taxon>Aves</taxon>
        <taxon>Neognathae</taxon>
        <taxon>Galloanserae</taxon>
        <taxon>Galliformes</taxon>
        <taxon>Phasianidae</taxon>
        <taxon>Phasianinae</taxon>
        <taxon>Gallus</taxon>
    </lineage>
</organism>
<evidence type="ECO:0000250" key="1">
    <source>
        <dbReference type="UniProtKB" id="P70217"/>
    </source>
</evidence>
<evidence type="ECO:0000255" key="2">
    <source>
        <dbReference type="PROSITE-ProRule" id="PRU00108"/>
    </source>
</evidence>
<evidence type="ECO:0000256" key="3">
    <source>
        <dbReference type="SAM" id="MobiDB-lite"/>
    </source>
</evidence>
<evidence type="ECO:0000269" key="4">
    <source>
    </source>
</evidence>
<evidence type="ECO:0000305" key="5"/>
<feature type="chain" id="PRO_0000200246" description="Homeobox protein Hox-D13">
    <location>
        <begin position="1"/>
        <end position="301"/>
    </location>
</feature>
<feature type="DNA-binding region" description="Homeobox" evidence="2">
    <location>
        <begin position="234"/>
        <end position="293"/>
    </location>
</feature>
<feature type="region of interest" description="Disordered" evidence="3">
    <location>
        <begin position="1"/>
        <end position="20"/>
    </location>
</feature>
<feature type="region of interest" description="Disordered" evidence="3">
    <location>
        <begin position="55"/>
        <end position="75"/>
    </location>
</feature>
<feature type="compositionally biased region" description="Gly residues" evidence="3">
    <location>
        <begin position="8"/>
        <end position="18"/>
    </location>
</feature>
<feature type="sequence conflict" description="In Ref. 2." evidence="5" ref="2">
    <original>QSSHFWKSSFP</original>
    <variation>NSNFSRRVFSL</variation>
    <location>
        <begin position="208"/>
        <end position="218"/>
    </location>
</feature>
<sequence>MDGLRGDSSGGGGGGGTPGQCRNFLSSPVFGAAHTGRAAAAAAAAASGFAYAGGGERSGAAARPDPPAKDCPGSGAPPAAPALGYGYHFGNGYYSCRMSNGVGIQQNALKSPPHASIGGFPVEKYMDVSSLTSTSVPANEVSTRAKEVSSYQGYTNPYQHVPGYIDMVSTFGSGEPRHETYISMEGYQSWTLANGWNGQVYCAKDQTQSSHFWKSSFPGDVALNQPEMCVYRRGRKKRVPYTKLQLKELENEYAINKFINKDKRRRISAATNLSERQVTIWFQNRRVKDKKIVSKLKDNVS</sequence>
<dbReference type="EMBL" id="L09550">
    <property type="protein sequence ID" value="AAA48824.1"/>
    <property type="molecule type" value="mRNA"/>
</dbReference>
<dbReference type="EMBL" id="D10290">
    <property type="protein sequence ID" value="BAA01135.1"/>
    <property type="molecule type" value="Genomic_DNA"/>
</dbReference>
<dbReference type="PIR" id="S35526">
    <property type="entry name" value="S35526"/>
</dbReference>
<dbReference type="RefSeq" id="NP_990765.1">
    <property type="nucleotide sequence ID" value="NM_205434.1"/>
</dbReference>
<dbReference type="SMR" id="P24344"/>
<dbReference type="FunCoup" id="P24344">
    <property type="interactions" value="1"/>
</dbReference>
<dbReference type="STRING" id="9031.ENSGALP00000054291"/>
<dbReference type="GlyGen" id="P24344">
    <property type="glycosylation" value="1 site"/>
</dbReference>
<dbReference type="PaxDb" id="9031-ENSGALP00000015076"/>
<dbReference type="GeneID" id="396415"/>
<dbReference type="KEGG" id="gga:396415"/>
<dbReference type="CTD" id="3239"/>
<dbReference type="VEuPathDB" id="HostDB:geneid_396415"/>
<dbReference type="eggNOG" id="KOG0487">
    <property type="taxonomic scope" value="Eukaryota"/>
</dbReference>
<dbReference type="InParanoid" id="P24344"/>
<dbReference type="OMA" id="KAASWEM"/>
<dbReference type="OrthoDB" id="6159439at2759"/>
<dbReference type="PhylomeDB" id="P24344"/>
<dbReference type="PRO" id="PR:P24344"/>
<dbReference type="Proteomes" id="UP000000539">
    <property type="component" value="Unassembled WGS sequence"/>
</dbReference>
<dbReference type="GO" id="GO:0005634">
    <property type="term" value="C:nucleus"/>
    <property type="evidence" value="ECO:0007669"/>
    <property type="project" value="UniProtKB-SubCell"/>
</dbReference>
<dbReference type="GO" id="GO:0001228">
    <property type="term" value="F:DNA-binding transcription activator activity, RNA polymerase II-specific"/>
    <property type="evidence" value="ECO:0000250"/>
    <property type="project" value="UniProtKB"/>
</dbReference>
<dbReference type="GO" id="GO:0003700">
    <property type="term" value="F:DNA-binding transcription factor activity"/>
    <property type="evidence" value="ECO:0000250"/>
    <property type="project" value="UniProtKB"/>
</dbReference>
<dbReference type="GO" id="GO:0000981">
    <property type="term" value="F:DNA-binding transcription factor activity, RNA polymerase II-specific"/>
    <property type="evidence" value="ECO:0000318"/>
    <property type="project" value="GO_Central"/>
</dbReference>
<dbReference type="GO" id="GO:0000978">
    <property type="term" value="F:RNA polymerase II cis-regulatory region sequence-specific DNA binding"/>
    <property type="evidence" value="ECO:0000318"/>
    <property type="project" value="GO_Central"/>
</dbReference>
<dbReference type="GO" id="GO:0045944">
    <property type="term" value="P:positive regulation of transcription by RNA polymerase II"/>
    <property type="evidence" value="ECO:0000250"/>
    <property type="project" value="UniProtKB"/>
</dbReference>
<dbReference type="GO" id="GO:0006357">
    <property type="term" value="P:regulation of transcription by RNA polymerase II"/>
    <property type="evidence" value="ECO:0000318"/>
    <property type="project" value="GO_Central"/>
</dbReference>
<dbReference type="CDD" id="cd00086">
    <property type="entry name" value="homeodomain"/>
    <property type="match status" value="1"/>
</dbReference>
<dbReference type="FunFam" id="1.10.10.60:FF:000084">
    <property type="entry name" value="Homeobox protein Hox-D13"/>
    <property type="match status" value="1"/>
</dbReference>
<dbReference type="Gene3D" id="1.10.10.60">
    <property type="entry name" value="Homeodomain-like"/>
    <property type="match status" value="1"/>
</dbReference>
<dbReference type="InterPro" id="IPR051003">
    <property type="entry name" value="AP_axis_regulatory_Homeobox"/>
</dbReference>
<dbReference type="InterPro" id="IPR001356">
    <property type="entry name" value="HD"/>
</dbReference>
<dbReference type="InterPro" id="IPR017970">
    <property type="entry name" value="Homeobox_CS"/>
</dbReference>
<dbReference type="InterPro" id="IPR009057">
    <property type="entry name" value="Homeodomain-like_sf"/>
</dbReference>
<dbReference type="InterPro" id="IPR022067">
    <property type="entry name" value="HoxA13_N"/>
</dbReference>
<dbReference type="PANTHER" id="PTHR45804:SF4">
    <property type="entry name" value="HOMEOBOX PROTEIN HOX-D13"/>
    <property type="match status" value="1"/>
</dbReference>
<dbReference type="PANTHER" id="PTHR45804">
    <property type="entry name" value="SEGMENTATION PROTEIN FUSHI TARAZU-LIKE PROTEIN"/>
    <property type="match status" value="1"/>
</dbReference>
<dbReference type="Pfam" id="PF00046">
    <property type="entry name" value="Homeodomain"/>
    <property type="match status" value="1"/>
</dbReference>
<dbReference type="Pfam" id="PF12284">
    <property type="entry name" value="HoxA13_N"/>
    <property type="match status" value="1"/>
</dbReference>
<dbReference type="SMART" id="SM00389">
    <property type="entry name" value="HOX"/>
    <property type="match status" value="1"/>
</dbReference>
<dbReference type="SUPFAM" id="SSF46689">
    <property type="entry name" value="Homeodomain-like"/>
    <property type="match status" value="1"/>
</dbReference>
<dbReference type="PROSITE" id="PS00027">
    <property type="entry name" value="HOMEOBOX_1"/>
    <property type="match status" value="1"/>
</dbReference>
<dbReference type="PROSITE" id="PS50071">
    <property type="entry name" value="HOMEOBOX_2"/>
    <property type="match status" value="1"/>
</dbReference>
<name>HXD13_CHICK</name>
<proteinExistence type="evidence at transcript level"/>
<comment type="function">
    <text evidence="1 4">Sequence-specific transcription factor that binds gene promoters and activates their transcription (By similarity). Part of a developmental regulatory system that provides cells with specific positional identities on the anterior-posterior axis (PubMed:1672266).</text>
</comment>
<comment type="subcellular location">
    <subcellularLocation>
        <location evidence="1">Nucleus</location>
    </subcellularLocation>
</comment>
<comment type="developmental stage">
    <text>Coordinately expressed in partially overlapping domains during wing development.</text>
</comment>
<comment type="similarity">
    <text evidence="5">Belongs to the Abd-B homeobox family.</text>
</comment>
<reference key="1">
    <citation type="journal article" date="1993" name="Nucleic Acids Res.">
        <title>Cloning of full coding chicken cDNAs for the homeobox-containing gene Hoxd-13.</title>
        <authorList>
            <person name="Rogina B."/>
            <person name="Upholt W.B."/>
        </authorList>
    </citation>
    <scope>NUCLEOTIDE SEQUENCE [MRNA]</scope>
</reference>
<reference key="2">
    <citation type="submission" date="1992-02" db="EMBL/GenBank/DDBJ databases">
        <authorList>
            <person name="Nohno T."/>
        </authorList>
    </citation>
    <scope>NUCLEOTIDE SEQUENCE OF 208-301</scope>
</reference>
<reference key="3">
    <citation type="journal article" date="1991" name="Cell">
        <title>Involvement of the Chox-4 chicken homeobox genes in determination of anteroposterior axial polarity during limb development.</title>
        <authorList>
            <person name="Nohno T."/>
            <person name="Noji S."/>
            <person name="Koyama E."/>
            <person name="Ohyama K."/>
            <person name="Myokai F."/>
            <person name="Kuroiwa A."/>
            <person name="Saito T."/>
            <person name="Taniguchi S."/>
        </authorList>
    </citation>
    <scope>NUCLEOTIDE SEQUENCE [GENOMIC DNA] OF 234-301</scope>
    <scope>FUNCTION</scope>
</reference>
<reference key="4">
    <citation type="journal article" date="1991" name="Nature">
        <title>Expression of the homeobox Hox-4 genes and the specification of position in chick wing development.</title>
        <authorList>
            <person name="Izpisua-Belmonte J.-C."/>
            <person name="Tickle C."/>
            <person name="Dolle P."/>
            <person name="Wolpert L."/>
            <person name="Duboule D."/>
        </authorList>
    </citation>
    <scope>NUCLEOTIDE SEQUENCE OF 234-293</scope>
</reference>